<evidence type="ECO:0000255" key="1">
    <source>
        <dbReference type="HAMAP-Rule" id="MF_01543"/>
    </source>
</evidence>
<name>FTHS_BACCQ</name>
<gene>
    <name evidence="1" type="primary">fhs</name>
    <name type="ordered locus">BCQ_2085</name>
</gene>
<organism>
    <name type="scientific">Bacillus cereus (strain Q1)</name>
    <dbReference type="NCBI Taxonomy" id="361100"/>
    <lineage>
        <taxon>Bacteria</taxon>
        <taxon>Bacillati</taxon>
        <taxon>Bacillota</taxon>
        <taxon>Bacilli</taxon>
        <taxon>Bacillales</taxon>
        <taxon>Bacillaceae</taxon>
        <taxon>Bacillus</taxon>
        <taxon>Bacillus cereus group</taxon>
    </lineage>
</organism>
<accession>B9IYP4</accession>
<keyword id="KW-0067">ATP-binding</keyword>
<keyword id="KW-0436">Ligase</keyword>
<keyword id="KW-0547">Nucleotide-binding</keyword>
<keyword id="KW-0554">One-carbon metabolism</keyword>
<feature type="chain" id="PRO_1000185247" description="Formate--tetrahydrofolate ligase">
    <location>
        <begin position="1"/>
        <end position="562"/>
    </location>
</feature>
<feature type="binding site" evidence="1">
    <location>
        <begin position="71"/>
        <end position="78"/>
    </location>
    <ligand>
        <name>ATP</name>
        <dbReference type="ChEBI" id="CHEBI:30616"/>
    </ligand>
</feature>
<sequence>MTTTTTVKSDIEIAQEASMKKIQEIAAELNILEDELEPYGHYKGKLSLDIFKRLQNEKDGKVVLVTAINPTPAGEGKSTVTVGLGQAFNKIGKKTVIALREPSLGPTMGLKGGAAGGGFSQVVPMEDINLHFTGDIHAITTANNALAAFIDNHIQQGNTLGIDTRKIVWKRCVDLNDRALRNVVIGLGGPVQGVPREDGFDITVASEIMAVFCLATDIQDLKARLSRIVVAYNFANQPVTVKDLGVEGALTLLLKDALKPNLVQTLENTPAIIHGGPFANIAHGCNSVIATTMAAKLGDYVITEAGFGADLGAEKFLDIKARAAGIKPEAVVIVATIRALKMHGGVAKDQLKEENVDALAKGMENLQKHVETIQSFGVPFVIAINKFITDTDAEVAYLQEWCNERGYAVSLTEVWEKGGQGGVDLAEKVLKEIEKGENNYAPLYELELPLEEKIRTIAQKVYGAKDIEFAPKARKQLAQYEGEGWSNLPICMAKTQYSLSDDATKLGRPSDFIVTIRELKPSIGAGFIVALTGTMLTMPGLPKQPAALQMDVNEDGKAVGLF</sequence>
<dbReference type="EC" id="6.3.4.3" evidence="1"/>
<dbReference type="EMBL" id="CP000227">
    <property type="protein sequence ID" value="ACM12513.1"/>
    <property type="molecule type" value="Genomic_DNA"/>
</dbReference>
<dbReference type="SMR" id="B9IYP4"/>
<dbReference type="KEGG" id="bcq:BCQ_2085"/>
<dbReference type="HOGENOM" id="CLU_003601_3_3_9"/>
<dbReference type="UniPathway" id="UPA00193"/>
<dbReference type="Proteomes" id="UP000000441">
    <property type="component" value="Chromosome"/>
</dbReference>
<dbReference type="GO" id="GO:0005524">
    <property type="term" value="F:ATP binding"/>
    <property type="evidence" value="ECO:0007669"/>
    <property type="project" value="UniProtKB-UniRule"/>
</dbReference>
<dbReference type="GO" id="GO:0004329">
    <property type="term" value="F:formate-tetrahydrofolate ligase activity"/>
    <property type="evidence" value="ECO:0007669"/>
    <property type="project" value="UniProtKB-UniRule"/>
</dbReference>
<dbReference type="GO" id="GO:0035999">
    <property type="term" value="P:tetrahydrofolate interconversion"/>
    <property type="evidence" value="ECO:0007669"/>
    <property type="project" value="UniProtKB-UniRule"/>
</dbReference>
<dbReference type="CDD" id="cd00477">
    <property type="entry name" value="FTHFS"/>
    <property type="match status" value="1"/>
</dbReference>
<dbReference type="FunFam" id="3.30.1510.10:FF:000001">
    <property type="entry name" value="Formate--tetrahydrofolate ligase"/>
    <property type="match status" value="1"/>
</dbReference>
<dbReference type="FunFam" id="3.10.410.10:FF:000001">
    <property type="entry name" value="Putative formate--tetrahydrofolate ligase"/>
    <property type="match status" value="1"/>
</dbReference>
<dbReference type="Gene3D" id="3.30.1510.10">
    <property type="entry name" value="Domain 2, N(10)-formyltetrahydrofolate synthetase"/>
    <property type="match status" value="1"/>
</dbReference>
<dbReference type="Gene3D" id="3.10.410.10">
    <property type="entry name" value="Formyltetrahydrofolate synthetase, domain 3"/>
    <property type="match status" value="1"/>
</dbReference>
<dbReference type="Gene3D" id="3.40.50.300">
    <property type="entry name" value="P-loop containing nucleotide triphosphate hydrolases"/>
    <property type="match status" value="1"/>
</dbReference>
<dbReference type="HAMAP" id="MF_01543">
    <property type="entry name" value="FTHFS"/>
    <property type="match status" value="1"/>
</dbReference>
<dbReference type="InterPro" id="IPR000559">
    <property type="entry name" value="Formate_THF_ligase"/>
</dbReference>
<dbReference type="InterPro" id="IPR020628">
    <property type="entry name" value="Formate_THF_ligase_CS"/>
</dbReference>
<dbReference type="InterPro" id="IPR027417">
    <property type="entry name" value="P-loop_NTPase"/>
</dbReference>
<dbReference type="NCBIfam" id="NF010030">
    <property type="entry name" value="PRK13505.1"/>
    <property type="match status" value="1"/>
</dbReference>
<dbReference type="Pfam" id="PF01268">
    <property type="entry name" value="FTHFS"/>
    <property type="match status" value="1"/>
</dbReference>
<dbReference type="SUPFAM" id="SSF52540">
    <property type="entry name" value="P-loop containing nucleoside triphosphate hydrolases"/>
    <property type="match status" value="1"/>
</dbReference>
<dbReference type="PROSITE" id="PS00721">
    <property type="entry name" value="FTHFS_1"/>
    <property type="match status" value="1"/>
</dbReference>
<dbReference type="PROSITE" id="PS00722">
    <property type="entry name" value="FTHFS_2"/>
    <property type="match status" value="1"/>
</dbReference>
<proteinExistence type="inferred from homology"/>
<protein>
    <recommendedName>
        <fullName evidence="1">Formate--tetrahydrofolate ligase</fullName>
        <ecNumber evidence="1">6.3.4.3</ecNumber>
    </recommendedName>
    <alternativeName>
        <fullName evidence="1">Formyltetrahydrofolate synthetase</fullName>
        <shortName evidence="1">FHS</shortName>
        <shortName evidence="1">FTHFS</shortName>
    </alternativeName>
</protein>
<comment type="catalytic activity">
    <reaction evidence="1">
        <text>(6S)-5,6,7,8-tetrahydrofolate + formate + ATP = (6R)-10-formyltetrahydrofolate + ADP + phosphate</text>
        <dbReference type="Rhea" id="RHEA:20221"/>
        <dbReference type="ChEBI" id="CHEBI:15740"/>
        <dbReference type="ChEBI" id="CHEBI:30616"/>
        <dbReference type="ChEBI" id="CHEBI:43474"/>
        <dbReference type="ChEBI" id="CHEBI:57453"/>
        <dbReference type="ChEBI" id="CHEBI:195366"/>
        <dbReference type="ChEBI" id="CHEBI:456216"/>
        <dbReference type="EC" id="6.3.4.3"/>
    </reaction>
</comment>
<comment type="pathway">
    <text evidence="1">One-carbon metabolism; tetrahydrofolate interconversion.</text>
</comment>
<comment type="similarity">
    <text evidence="1">Belongs to the formate--tetrahydrofolate ligase family.</text>
</comment>
<reference key="1">
    <citation type="journal article" date="2009" name="J. Bacteriol.">
        <title>Complete genome sequence of the extremophilic Bacillus cereus strain Q1 with industrial applications.</title>
        <authorList>
            <person name="Xiong Z."/>
            <person name="Jiang Y."/>
            <person name="Qi D."/>
            <person name="Lu H."/>
            <person name="Yang F."/>
            <person name="Yang J."/>
            <person name="Chen L."/>
            <person name="Sun L."/>
            <person name="Xu X."/>
            <person name="Xue Y."/>
            <person name="Zhu Y."/>
            <person name="Jin Q."/>
        </authorList>
    </citation>
    <scope>NUCLEOTIDE SEQUENCE [LARGE SCALE GENOMIC DNA]</scope>
    <source>
        <strain>Q1</strain>
    </source>
</reference>